<evidence type="ECO:0000250" key="1"/>
<evidence type="ECO:0000255" key="2"/>
<evidence type="ECO:0000256" key="3">
    <source>
        <dbReference type="SAM" id="MobiDB-lite"/>
    </source>
</evidence>
<evidence type="ECO:0000305" key="4">
    <source>
    </source>
</evidence>
<evidence type="ECO:0000305" key="5">
    <source>
    </source>
</evidence>
<gene>
    <name type="primary">env</name>
</gene>
<feature type="signal peptide" evidence="2">
    <location>
        <begin position="1"/>
        <end position="33"/>
    </location>
</feature>
<feature type="chain" id="PRO_0000390827" description="Envelope glycoprotein" evidence="1">
    <location>
        <begin position="34"/>
        <end position="640"/>
    </location>
</feature>
<feature type="chain" id="PRO_0000390828" description="Surface protein" evidence="1">
    <location>
        <begin position="34"/>
        <end position="444"/>
    </location>
</feature>
<feature type="chain" id="PRO_0000390829" description="Transmembrane protein" evidence="1">
    <location>
        <begin position="445"/>
        <end position="645"/>
    </location>
</feature>
<feature type="peptide" id="PRO_0000390830" description="R-peptide" evidence="1">
    <location>
        <begin position="625"/>
        <end position="645"/>
    </location>
</feature>
<feature type="topological domain" description="Extracellular" evidence="2">
    <location>
        <begin position="34"/>
        <end position="585"/>
    </location>
</feature>
<feature type="transmembrane region" description="Helical" evidence="2">
    <location>
        <begin position="586"/>
        <end position="606"/>
    </location>
</feature>
<feature type="topological domain" description="Cytoplasmic" evidence="2">
    <location>
        <begin position="607"/>
        <end position="640"/>
    </location>
</feature>
<feature type="region of interest" description="Receptor-binding domain (RBD)" evidence="2">
    <location>
        <begin position="32"/>
        <end position="237"/>
    </location>
</feature>
<feature type="region of interest" description="Disordered" evidence="3">
    <location>
        <begin position="259"/>
        <end position="286"/>
    </location>
</feature>
<feature type="region of interest" description="Fusion peptide" evidence="1">
    <location>
        <begin position="447"/>
        <end position="467"/>
    </location>
</feature>
<feature type="region of interest" description="Immunosuppression" evidence="1">
    <location>
        <begin position="513"/>
        <end position="529"/>
    </location>
</feature>
<feature type="coiled-coil region" evidence="2">
    <location>
        <begin position="490"/>
        <end position="510"/>
    </location>
</feature>
<feature type="short sequence motif" description="CXXC" evidence="1">
    <location>
        <begin position="311"/>
        <end position="314"/>
    </location>
</feature>
<feature type="short sequence motif" description="CX6CC" evidence="1">
    <location>
        <begin position="530"/>
        <end position="538"/>
    </location>
</feature>
<feature type="short sequence motif" description="YXXL motif; contains endocytosis signal" evidence="1">
    <location>
        <begin position="630"/>
        <end position="633"/>
    </location>
</feature>
<feature type="site" description="Cleavage; by host" evidence="1">
    <location>
        <begin position="444"/>
        <end position="445"/>
    </location>
</feature>
<feature type="site" description="Cleavage; by viral protease p14" evidence="1">
    <location>
        <begin position="624"/>
        <end position="625"/>
    </location>
</feature>
<feature type="lipid moiety-binding region" description="S-palmitoyl cysteine; by host" evidence="1">
    <location>
        <position position="605"/>
    </location>
</feature>
<feature type="glycosylation site" description="N-linked (GlcNAc...) asparagine; by host" evidence="2">
    <location>
        <position position="43"/>
    </location>
</feature>
<feature type="glycosylation site" description="N-linked (GlcNAc...) asparagine; by host" evidence="2">
    <location>
        <position position="58"/>
    </location>
</feature>
<feature type="glycosylation site" description="N-linked (GlcNAc...) asparagine; by host" evidence="2">
    <location>
        <position position="301"/>
    </location>
</feature>
<feature type="glycosylation site" description="N-linked (GlcNAc...) asparagine; by host" evidence="2">
    <location>
        <position position="333"/>
    </location>
</feature>
<feature type="glycosylation site" description="N-linked (GlcNAc...) asparagine; by host" evidence="2">
    <location>
        <position position="340"/>
    </location>
</feature>
<feature type="glycosylation site" description="N-linked (GlcNAc...) asparagine; by host" evidence="2">
    <location>
        <position position="373"/>
    </location>
</feature>
<feature type="glycosylation site" description="N-linked (GlcNAc...) asparagine; by host" evidence="2">
    <location>
        <position position="409"/>
    </location>
</feature>
<feature type="disulfide bond" evidence="1">
    <location>
        <begin position="113"/>
        <end position="130"/>
    </location>
</feature>
<feature type="disulfide bond" evidence="1">
    <location>
        <begin position="122"/>
        <end position="135"/>
    </location>
</feature>
<feature type="disulfide bond" description="Interchain (between SU and TM chains, or C-314 with C-538); in linked form" evidence="1">
    <location>
        <begin position="311"/>
        <end position="538"/>
    </location>
</feature>
<feature type="disulfide bond" evidence="1">
    <location>
        <begin position="311"/>
        <end position="314"/>
    </location>
</feature>
<feature type="disulfide bond" evidence="1">
    <location>
        <begin position="341"/>
        <end position="395"/>
    </location>
</feature>
<feature type="disulfide bond" evidence="1">
    <location>
        <begin position="360"/>
        <end position="372"/>
    </location>
</feature>
<feature type="disulfide bond" evidence="1">
    <location>
        <begin position="402"/>
        <end position="415"/>
    </location>
</feature>
<feature type="disulfide bond" evidence="1">
    <location>
        <begin position="530"/>
        <end position="537"/>
    </location>
</feature>
<organism>
    <name type="scientific">Xenotropic MuLV-related virus (isolate VP42)</name>
    <name type="common">XMRV</name>
    <dbReference type="NCBI Taxonomy" id="356664"/>
    <lineage>
        <taxon>Viruses</taxon>
        <taxon>Riboviria</taxon>
        <taxon>Pararnavirae</taxon>
        <taxon>Artverviricota</taxon>
        <taxon>Revtraviricetes</taxon>
        <taxon>Ortervirales</taxon>
        <taxon>Retroviridae</taxon>
        <taxon>Orthoretrovirinae</taxon>
        <taxon>Gammaretrovirus</taxon>
        <taxon>Murine leukemia-related retroviruses</taxon>
    </lineage>
</organism>
<comment type="function">
    <text evidence="1">The surface protein (SU) attaches the virus to the host cell by binding to its receptor. This interaction activates a thiol in a CXXC motif of the C-terminal domain, where the other Cys residue participates in the formation of the intersubunit disulfide. The activated thiol will attack the disulfide and cause its isomerization into a disulfide isomer within the motif. This leads to SU displacement and TM refolding, and is thought to activate its fusogenic potential by unmasking its fusion peptide. Fusion occurs at the host cell plasma membrane (By similarity).</text>
</comment>
<comment type="function">
    <text evidence="1">The transmembrane protein (TM) acts as a class I viral fusion protein. Under the current model, the protein has at least 3 conformational states: pre-fusion native state, pre-hairpin intermediate state, and post-fusion hairpin state. During viral and target cell membrane fusion, the coiled coil regions (heptad repeats) assume a trimer-of-hairpins structure, positioning the fusion peptide in close proximity to the C-terminal region of the ectodomain. The formation of this structure appears to drive apposition and subsequent fusion of viral and target cell membranes. Membranes fusion leads to delivery of the nucleocapsid into the cytoplasm (By similarity).</text>
</comment>
<comment type="subunit">
    <text evidence="1">The mature envelope protein (Env) consists of a trimer of SU-TM heterodimers attached by a labile interchain disulfide bond. The activated Env consists of SU monomers and TM trimers (By similarity).</text>
</comment>
<comment type="subcellular location">
    <molecule>Transmembrane protein</molecule>
    <subcellularLocation>
        <location evidence="1">Virion membrane</location>
        <topology evidence="1">Single-pass type I membrane protein</topology>
    </subcellularLocation>
    <subcellularLocation>
        <location evidence="1">Host cell membrane</location>
        <topology evidence="1">Single-pass type I membrane protein</topology>
    </subcellularLocation>
</comment>
<comment type="subcellular location">
    <molecule>Surface protein</molecule>
    <subcellularLocation>
        <location>Virion membrane</location>
        <topology>Peripheral membrane protein</topology>
    </subcellularLocation>
    <subcellularLocation>
        <location evidence="1">Host cell membrane</location>
        <topology evidence="1">Peripheral membrane protein</topology>
    </subcellularLocation>
    <text evidence="1">The surface protein is not anchored to the viral envelope, but associates with the virion surface through its binding to TM. Both proteins are thought to be concentrated at the site of budding and incorporated into the virions possibly by contacts between the cytoplasmic tail of Env and the N-terminus of Gag (By similarity).</text>
</comment>
<comment type="subcellular location">
    <molecule>R-peptide</molecule>
    <subcellularLocation>
        <location>Host cell membrane</location>
        <topology>Peripheral membrane protein</topology>
    </subcellularLocation>
    <text evidence="1">The R-peptide is membrane-associated through its palmitate.</text>
</comment>
<comment type="domain">
    <text evidence="1">The 17 amino acids long immunosuppressive region is present in many retroviral envelope proteins. Synthetic peptides derived from this relatively conserved sequence inhibit immune function in vitro and in vivo (By similarity).</text>
</comment>
<comment type="domain">
    <text evidence="1">The YXXL motif is involved in determining the exact site of viral release at the surface of infected mononuclear cells and promotes endocytosis.</text>
</comment>
<comment type="PTM">
    <text evidence="1">Specific enzymatic cleavages in vivo yield mature proteins. Envelope glycoproteins are synthesized as an inactive precursor that is N-glycosylated and processed likely by host cell furin or by a furin-like protease in the Golgi to yield the mature SU and TM proteins. The cleavage site between SU and TM requires the minimal sequence [KR]-X-[KR]-R. The R-peptide is released from the C-terminus of the cytoplasmic tail of the TM protein upon particle formation as a result of proteolytic cleavage by the viral protease. Cleavage of this peptide is required for TM to become fusogenic (By similarity).</text>
</comment>
<comment type="PTM">
    <text evidence="1">The CXXC motif is highly conserved across a broad range of retroviral envelope proteins. It is thought to participate in the formation of a labile disulfide bond possibly with the CX6CC motif present in the transmembrane protein. Isomerization of the intersubunit disulfide bond to an SU intrachain disulfide bond is thought to occur upon receptor recognition in order to allow membrane fusion (By similarity).</text>
</comment>
<comment type="PTM">
    <text evidence="1">The transmembrane protein is palmitoylated.</text>
</comment>
<comment type="PTM">
    <text>The R-peptide is palmitoylated.</text>
</comment>
<comment type="caution">
    <text evidence="4 5">Originally thought to be characterized from prostate tumors, the described gammaretrovirus XMRV is in fact laboratory-derived and there is no association of XMRV with prostate cancer.</text>
</comment>
<proteinExistence type="inferred from homology"/>
<accession>Q2F7I8</accession>
<name>ENV_XMRV4</name>
<organismHost>
    <name type="scientific">Homo sapiens</name>
    <name type="common">Human</name>
    <dbReference type="NCBI Taxonomy" id="9606"/>
</organismHost>
<reference key="1">
    <citation type="journal article" date="2006" name="PLoS Pathog.">
        <title>Identification of a novel Gammaretrovirus in prostate tumors of patients homozygous for R462Q RNASEL variant.</title>
        <authorList>
            <person name="Urisman A."/>
            <person name="Molinaro R.J."/>
            <person name="Fischer N."/>
            <person name="Plummer S.J."/>
            <person name="Casey G."/>
            <person name="Klein E.A."/>
            <person name="Malathi K."/>
            <person name="Magi-Galluzzi C."/>
            <person name="Tubbs R.R."/>
            <person name="Ganem D."/>
            <person name="Silverman R.H."/>
            <person name="DeRisi J.L."/>
        </authorList>
    </citation>
    <scope>NUCLEOTIDE SEQUENCE [GENOMIC RNA]</scope>
    <scope>RETRACTED PAPER</scope>
</reference>
<reference key="2">
    <citation type="journal article" date="2012" name="PLoS Pathog.">
        <authorList>
            <person name="Urisman A."/>
            <person name="Molinaro R.J."/>
            <person name="Fischer N."/>
            <person name="Plummer S.J."/>
            <person name="Casey G."/>
            <person name="Klein E.A."/>
            <person name="Malathi K."/>
            <person name="Magi-Galluzzi C."/>
            <person name="Tubbs R.R."/>
            <person name="Ganem D."/>
            <person name="Silverman R.H."/>
            <person name="DeRisi J.L."/>
        </authorList>
    </citation>
    <scope>RETRACTION NOTICE OF PUBMED:16609730</scope>
</reference>
<dbReference type="EMBL" id="DQ241302">
    <property type="protein sequence ID" value="ABB83229.1"/>
    <property type="molecule type" value="Genomic_RNA"/>
</dbReference>
<dbReference type="SMR" id="Q2F7I8"/>
<dbReference type="GlyCosmos" id="Q2F7I8">
    <property type="glycosylation" value="7 sites, No reported glycans"/>
</dbReference>
<dbReference type="Proteomes" id="UP000008602">
    <property type="component" value="Genome"/>
</dbReference>
<dbReference type="GO" id="GO:0020002">
    <property type="term" value="C:host cell plasma membrane"/>
    <property type="evidence" value="ECO:0007669"/>
    <property type="project" value="UniProtKB-SubCell"/>
</dbReference>
<dbReference type="GO" id="GO:0016020">
    <property type="term" value="C:membrane"/>
    <property type="evidence" value="ECO:0007669"/>
    <property type="project" value="UniProtKB-KW"/>
</dbReference>
<dbReference type="GO" id="GO:0019031">
    <property type="term" value="C:viral envelope"/>
    <property type="evidence" value="ECO:0007669"/>
    <property type="project" value="UniProtKB-KW"/>
</dbReference>
<dbReference type="GO" id="GO:0055036">
    <property type="term" value="C:virion membrane"/>
    <property type="evidence" value="ECO:0007669"/>
    <property type="project" value="UniProtKB-SubCell"/>
</dbReference>
<dbReference type="GO" id="GO:0019064">
    <property type="term" value="P:fusion of virus membrane with host plasma membrane"/>
    <property type="evidence" value="ECO:0007669"/>
    <property type="project" value="UniProtKB-KW"/>
</dbReference>
<dbReference type="GO" id="GO:0046718">
    <property type="term" value="P:symbiont entry into host cell"/>
    <property type="evidence" value="ECO:0007669"/>
    <property type="project" value="UniProtKB-KW"/>
</dbReference>
<dbReference type="GO" id="GO:0019062">
    <property type="term" value="P:virion attachment to host cell"/>
    <property type="evidence" value="ECO:0007669"/>
    <property type="project" value="UniProtKB-KW"/>
</dbReference>
<dbReference type="CDD" id="cd09851">
    <property type="entry name" value="HTLV-1-like_HR1-HR2"/>
    <property type="match status" value="1"/>
</dbReference>
<dbReference type="Gene3D" id="1.10.287.210">
    <property type="match status" value="1"/>
</dbReference>
<dbReference type="Gene3D" id="3.90.310.10">
    <property type="entry name" value="ENV polyprotein, receptor-binding domain"/>
    <property type="match status" value="1"/>
</dbReference>
<dbReference type="InterPro" id="IPR008981">
    <property type="entry name" value="FMuLV_rcpt-bd"/>
</dbReference>
<dbReference type="InterPro" id="IPR018154">
    <property type="entry name" value="TLV/ENV_coat_polyprotein"/>
</dbReference>
<dbReference type="PANTHER" id="PTHR10424:SF72">
    <property type="entry name" value="BC035947 PROTEIN-RELATED"/>
    <property type="match status" value="1"/>
</dbReference>
<dbReference type="PANTHER" id="PTHR10424">
    <property type="entry name" value="VIRAL ENVELOPE PROTEIN"/>
    <property type="match status" value="1"/>
</dbReference>
<dbReference type="Pfam" id="PF00429">
    <property type="entry name" value="TLV_coat"/>
    <property type="match status" value="1"/>
</dbReference>
<dbReference type="SUPFAM" id="SSF49830">
    <property type="entry name" value="ENV polyprotein, receptor-binding domain"/>
    <property type="match status" value="1"/>
</dbReference>
<dbReference type="SUPFAM" id="SSF58069">
    <property type="entry name" value="Virus ectodomain"/>
    <property type="match status" value="1"/>
</dbReference>
<sequence>MESPAFSKPLKDKINPWGPLIIMGILVRAGASVQRDSPHQVFNVTWKITNLMTGQTANATSLLGTMTDTFPKLYFDLCDLVGDNWDDPEPDIGDGCRSPGGRKRTRLYDFYVCPGHTVLTGCGGPREGYCGKWGCETTGQAYWKPSSSWDLISLKRGNTPKGQGPCFDSSVGSGSIQGATPGGRCNPLVLEFTDAGKRASWDAPKTWGLRLYRSTGADPVTLFSLTRQVLNVGPRVPIGPNPVITEQLPPSQPVQIMLPRPPRPPPSGAASMVPGAPPPSQQPGTGDRLLNLVEGAYQALNLTSPDKTQECWLCLVSGPPYYEGVAVLGTYSNHTSAPANCSVTSQHKLTLSEVTGQGLCIGAVPKTHQALCNTTQKTSDGSYYLASPAGTIWACSTGLTPCLSTTVLNLTTDYCVLVELWPKVTYHSPNYVYGQFEKKTKYKREPVSLTLALLLGGLTMGGIAAGVGTGTTALVATKQFEQLQAAIHTDLGALEKSVSALEKSLTSLSEVVLQNRRGLDLLFLKEGGLCAALKEECCFYADHTGVVRDSMAKLRERLNQRQKLFESGQGWFEGLFNRSPWFTTLISTIMGPLIVLLLILLFGPCILNRLVQFVKDRISVVQALVLTQQYHQLKSIDPEEVESRE</sequence>
<keyword id="KW-0165">Cleavage on pair of basic residues</keyword>
<keyword id="KW-0175">Coiled coil</keyword>
<keyword id="KW-1015">Disulfide bond</keyword>
<keyword id="KW-1169">Fusion of virus membrane with host cell membrane</keyword>
<keyword id="KW-1168">Fusion of virus membrane with host membrane</keyword>
<keyword id="KW-0325">Glycoprotein</keyword>
<keyword id="KW-1032">Host cell membrane</keyword>
<keyword id="KW-1043">Host membrane</keyword>
<keyword id="KW-0945">Host-virus interaction</keyword>
<keyword id="KW-0449">Lipoprotein</keyword>
<keyword id="KW-0472">Membrane</keyword>
<keyword id="KW-0564">Palmitate</keyword>
<keyword id="KW-0732">Signal</keyword>
<keyword id="KW-0812">Transmembrane</keyword>
<keyword id="KW-1133">Transmembrane helix</keyword>
<keyword id="KW-1161">Viral attachment to host cell</keyword>
<keyword id="KW-0261">Viral envelope protein</keyword>
<keyword id="KW-1162">Viral penetration into host cytoplasm</keyword>
<keyword id="KW-0946">Virion</keyword>
<keyword id="KW-1160">Virus entry into host cell</keyword>
<protein>
    <recommendedName>
        <fullName>Envelope glycoprotein</fullName>
    </recommendedName>
    <alternativeName>
        <fullName>Env polyprotein</fullName>
    </alternativeName>
    <component>
        <recommendedName>
            <fullName>Surface protein</fullName>
            <shortName>SU</shortName>
        </recommendedName>
    </component>
    <component>
        <recommendedName>
            <fullName>Transmembrane protein</fullName>
            <shortName>TM</shortName>
        </recommendedName>
    </component>
    <component>
        <recommendedName>
            <fullName>R-peptide</fullName>
        </recommendedName>
    </component>
</protein>